<sequence>MIKVVFMGTPDFSVPVLRRLIEDGYDVIGVVTQPDRPVGRKKVLTPTPVKVEAEKHGIPVLQPLRIREKDEYEKVLALEPDLIVTAAFGQIVPNEILEAPKYGCINVHASLLPELRGGAPIHYAIMEGKEKTGITIMYMVEKLDAGDILTQVEVEIEERETTGSLFDKLSEAGAHLLSKTVPLLIQGKLEPIKQNEEEVTFAYNIKREQEKIDWTKTGEEVYNHIRGLNPWPVAYTTLAGQVVKVWWGEKVPVTKSAEAGTIVAIEEDGFVVATGNETGVKITELQPSGKKRMSCSQFLRGTKPEIGTKLGENA</sequence>
<reference key="1">
    <citation type="submission" date="2008-10" db="EMBL/GenBank/DDBJ databases">
        <title>Genome sequence of Bacillus anthracis str. CDC 684.</title>
        <authorList>
            <person name="Dodson R.J."/>
            <person name="Munk A.C."/>
            <person name="Brettin T."/>
            <person name="Bruce D."/>
            <person name="Detter C."/>
            <person name="Tapia R."/>
            <person name="Han C."/>
            <person name="Sutton G."/>
            <person name="Sims D."/>
        </authorList>
    </citation>
    <scope>NUCLEOTIDE SEQUENCE [LARGE SCALE GENOMIC DNA]</scope>
    <source>
        <strain>CDC 684 / NRRL 3495</strain>
    </source>
</reference>
<protein>
    <recommendedName>
        <fullName evidence="1">Methionyl-tRNA formyltransferase</fullName>
        <ecNumber evidence="1">2.1.2.9</ecNumber>
    </recommendedName>
</protein>
<accession>C3L761</accession>
<name>FMT_BACAC</name>
<evidence type="ECO:0000255" key="1">
    <source>
        <dbReference type="HAMAP-Rule" id="MF_00182"/>
    </source>
</evidence>
<feature type="chain" id="PRO_1000190004" description="Methionyl-tRNA formyltransferase">
    <location>
        <begin position="1"/>
        <end position="314"/>
    </location>
</feature>
<feature type="binding site" evidence="1">
    <location>
        <begin position="110"/>
        <end position="113"/>
    </location>
    <ligand>
        <name>(6S)-5,6,7,8-tetrahydrofolate</name>
        <dbReference type="ChEBI" id="CHEBI:57453"/>
    </ligand>
</feature>
<proteinExistence type="inferred from homology"/>
<gene>
    <name evidence="1" type="primary">fmt</name>
    <name type="ordered locus">BAMEG_0627</name>
</gene>
<comment type="function">
    <text evidence="1">Attaches a formyl group to the free amino group of methionyl-tRNA(fMet). The formyl group appears to play a dual role in the initiator identity of N-formylmethionyl-tRNA by promoting its recognition by IF2 and preventing the misappropriation of this tRNA by the elongation apparatus.</text>
</comment>
<comment type="catalytic activity">
    <reaction evidence="1">
        <text>L-methionyl-tRNA(fMet) + (6R)-10-formyltetrahydrofolate = N-formyl-L-methionyl-tRNA(fMet) + (6S)-5,6,7,8-tetrahydrofolate + H(+)</text>
        <dbReference type="Rhea" id="RHEA:24380"/>
        <dbReference type="Rhea" id="RHEA-COMP:9952"/>
        <dbReference type="Rhea" id="RHEA-COMP:9953"/>
        <dbReference type="ChEBI" id="CHEBI:15378"/>
        <dbReference type="ChEBI" id="CHEBI:57453"/>
        <dbReference type="ChEBI" id="CHEBI:78530"/>
        <dbReference type="ChEBI" id="CHEBI:78844"/>
        <dbReference type="ChEBI" id="CHEBI:195366"/>
        <dbReference type="EC" id="2.1.2.9"/>
    </reaction>
</comment>
<comment type="similarity">
    <text evidence="1">Belongs to the Fmt family.</text>
</comment>
<dbReference type="EC" id="2.1.2.9" evidence="1"/>
<dbReference type="EMBL" id="CP001215">
    <property type="protein sequence ID" value="ACP15647.1"/>
    <property type="molecule type" value="Genomic_DNA"/>
</dbReference>
<dbReference type="RefSeq" id="WP_000598790.1">
    <property type="nucleotide sequence ID" value="NC_012581.1"/>
</dbReference>
<dbReference type="SMR" id="C3L761"/>
<dbReference type="GeneID" id="45023695"/>
<dbReference type="KEGG" id="bah:BAMEG_0627"/>
<dbReference type="HOGENOM" id="CLU_033347_1_1_9"/>
<dbReference type="GO" id="GO:0005829">
    <property type="term" value="C:cytosol"/>
    <property type="evidence" value="ECO:0007669"/>
    <property type="project" value="TreeGrafter"/>
</dbReference>
<dbReference type="GO" id="GO:0004479">
    <property type="term" value="F:methionyl-tRNA formyltransferase activity"/>
    <property type="evidence" value="ECO:0007669"/>
    <property type="project" value="UniProtKB-UniRule"/>
</dbReference>
<dbReference type="CDD" id="cd08646">
    <property type="entry name" value="FMT_core_Met-tRNA-FMT_N"/>
    <property type="match status" value="1"/>
</dbReference>
<dbReference type="CDD" id="cd08704">
    <property type="entry name" value="Met_tRNA_FMT_C"/>
    <property type="match status" value="1"/>
</dbReference>
<dbReference type="FunFam" id="3.10.25.10:FF:000003">
    <property type="entry name" value="Methionyl-tRNA formyltransferase"/>
    <property type="match status" value="1"/>
</dbReference>
<dbReference type="FunFam" id="3.40.50.170:FF:000004">
    <property type="entry name" value="Methionyl-tRNA formyltransferase"/>
    <property type="match status" value="1"/>
</dbReference>
<dbReference type="Gene3D" id="3.10.25.10">
    <property type="entry name" value="Formyl transferase, C-terminal domain"/>
    <property type="match status" value="1"/>
</dbReference>
<dbReference type="Gene3D" id="3.40.50.170">
    <property type="entry name" value="Formyl transferase, N-terminal domain"/>
    <property type="match status" value="1"/>
</dbReference>
<dbReference type="HAMAP" id="MF_00182">
    <property type="entry name" value="Formyl_trans"/>
    <property type="match status" value="1"/>
</dbReference>
<dbReference type="InterPro" id="IPR005794">
    <property type="entry name" value="Fmt"/>
</dbReference>
<dbReference type="InterPro" id="IPR005793">
    <property type="entry name" value="Formyl_trans_C"/>
</dbReference>
<dbReference type="InterPro" id="IPR037022">
    <property type="entry name" value="Formyl_trans_C_sf"/>
</dbReference>
<dbReference type="InterPro" id="IPR002376">
    <property type="entry name" value="Formyl_transf_N"/>
</dbReference>
<dbReference type="InterPro" id="IPR036477">
    <property type="entry name" value="Formyl_transf_N_sf"/>
</dbReference>
<dbReference type="InterPro" id="IPR011034">
    <property type="entry name" value="Formyl_transferase-like_C_sf"/>
</dbReference>
<dbReference type="InterPro" id="IPR001555">
    <property type="entry name" value="GART_AS"/>
</dbReference>
<dbReference type="InterPro" id="IPR044135">
    <property type="entry name" value="Met-tRNA-FMT_C"/>
</dbReference>
<dbReference type="InterPro" id="IPR041711">
    <property type="entry name" value="Met-tRNA-FMT_N"/>
</dbReference>
<dbReference type="NCBIfam" id="TIGR00460">
    <property type="entry name" value="fmt"/>
    <property type="match status" value="1"/>
</dbReference>
<dbReference type="PANTHER" id="PTHR11138">
    <property type="entry name" value="METHIONYL-TRNA FORMYLTRANSFERASE"/>
    <property type="match status" value="1"/>
</dbReference>
<dbReference type="PANTHER" id="PTHR11138:SF5">
    <property type="entry name" value="METHIONYL-TRNA FORMYLTRANSFERASE, MITOCHONDRIAL"/>
    <property type="match status" value="1"/>
</dbReference>
<dbReference type="Pfam" id="PF02911">
    <property type="entry name" value="Formyl_trans_C"/>
    <property type="match status" value="1"/>
</dbReference>
<dbReference type="Pfam" id="PF00551">
    <property type="entry name" value="Formyl_trans_N"/>
    <property type="match status" value="1"/>
</dbReference>
<dbReference type="SUPFAM" id="SSF50486">
    <property type="entry name" value="FMT C-terminal domain-like"/>
    <property type="match status" value="1"/>
</dbReference>
<dbReference type="SUPFAM" id="SSF53328">
    <property type="entry name" value="Formyltransferase"/>
    <property type="match status" value="1"/>
</dbReference>
<dbReference type="PROSITE" id="PS00373">
    <property type="entry name" value="GART"/>
    <property type="match status" value="1"/>
</dbReference>
<organism>
    <name type="scientific">Bacillus anthracis (strain CDC 684 / NRRL 3495)</name>
    <dbReference type="NCBI Taxonomy" id="568206"/>
    <lineage>
        <taxon>Bacteria</taxon>
        <taxon>Bacillati</taxon>
        <taxon>Bacillota</taxon>
        <taxon>Bacilli</taxon>
        <taxon>Bacillales</taxon>
        <taxon>Bacillaceae</taxon>
        <taxon>Bacillus</taxon>
        <taxon>Bacillus cereus group</taxon>
    </lineage>
</organism>
<keyword id="KW-0648">Protein biosynthesis</keyword>
<keyword id="KW-0808">Transferase</keyword>